<dbReference type="EMBL" id="AC006283">
    <property type="protein sequence ID" value="AAM15228.1"/>
    <property type="molecule type" value="Genomic_DNA"/>
</dbReference>
<dbReference type="EMBL" id="CP002685">
    <property type="protein sequence ID" value="AEC08111.1"/>
    <property type="molecule type" value="Genomic_DNA"/>
</dbReference>
<dbReference type="EMBL" id="BT003997">
    <property type="protein sequence ID" value="AAO42036.1"/>
    <property type="molecule type" value="mRNA"/>
</dbReference>
<dbReference type="EMBL" id="AY084332">
    <property type="protein sequence ID" value="AAM67275.1"/>
    <property type="status" value="ALT_INIT"/>
    <property type="molecule type" value="mRNA"/>
</dbReference>
<dbReference type="RefSeq" id="NP_565670.1">
    <property type="nucleotide sequence ID" value="NM_128395.3"/>
</dbReference>
<dbReference type="SMR" id="Q8S8H3"/>
<dbReference type="STRING" id="3702.Q8S8H3"/>
<dbReference type="PaxDb" id="3702-AT2G28355.1"/>
<dbReference type="ProteomicsDB" id="224636"/>
<dbReference type="EnsemblPlants" id="AT2G28355.1">
    <property type="protein sequence ID" value="AT2G28355.1"/>
    <property type="gene ID" value="AT2G28355"/>
</dbReference>
<dbReference type="GeneID" id="817383"/>
<dbReference type="Gramene" id="AT2G28355.1">
    <property type="protein sequence ID" value="AT2G28355.1"/>
    <property type="gene ID" value="AT2G28355"/>
</dbReference>
<dbReference type="KEGG" id="ath:AT2G28355"/>
<dbReference type="Araport" id="AT2G28355"/>
<dbReference type="TAIR" id="AT2G28355">
    <property type="gene designation" value="LCR5"/>
</dbReference>
<dbReference type="HOGENOM" id="CLU_182511_0_0_1"/>
<dbReference type="InParanoid" id="Q8S8H3"/>
<dbReference type="OMA" id="ECDSMCV"/>
<dbReference type="OrthoDB" id="1095584at2759"/>
<dbReference type="PhylomeDB" id="Q8S8H3"/>
<dbReference type="PRO" id="PR:Q8S8H3"/>
<dbReference type="Proteomes" id="UP000006548">
    <property type="component" value="Chromosome 2"/>
</dbReference>
<dbReference type="ExpressionAtlas" id="Q8S8H3">
    <property type="expression patterns" value="baseline and differential"/>
</dbReference>
<dbReference type="GO" id="GO:0005576">
    <property type="term" value="C:extracellular region"/>
    <property type="evidence" value="ECO:0007669"/>
    <property type="project" value="UniProtKB-SubCell"/>
</dbReference>
<dbReference type="GO" id="GO:0050832">
    <property type="term" value="P:defense response to fungus"/>
    <property type="evidence" value="ECO:0007669"/>
    <property type="project" value="UniProtKB-KW"/>
</dbReference>
<dbReference type="GO" id="GO:0031640">
    <property type="term" value="P:killing of cells of another organism"/>
    <property type="evidence" value="ECO:0007669"/>
    <property type="project" value="UniProtKB-KW"/>
</dbReference>
<dbReference type="InterPro" id="IPR010851">
    <property type="entry name" value="DEFL"/>
</dbReference>
<dbReference type="PANTHER" id="PTHR34783">
    <property type="entry name" value="DEFENSIN-LIKE PROTEIN 144-RELATED"/>
    <property type="match status" value="1"/>
</dbReference>
<dbReference type="PANTHER" id="PTHR34783:SF1">
    <property type="entry name" value="DEFENSIN-LIKE PROTEIN 144-RELATED"/>
    <property type="match status" value="1"/>
</dbReference>
<dbReference type="Pfam" id="PF07333">
    <property type="entry name" value="SLR1-BP"/>
    <property type="match status" value="1"/>
</dbReference>
<gene>
    <name type="primary">LCR5</name>
    <name type="ordered locus">At2g28355</name>
    <name type="ORF">T1B3.2</name>
</gene>
<sequence>MMKKLIQLSFTVMIIFTILVLGVVANEGLGKPKKQCNEILKQSNCVAAECDSMCVKKRGKGAGYCSPSKKCYCYYHCP</sequence>
<accession>Q8S8H3</accession>
<accession>P82720</accession>
<accession>Q8LGD4</accession>
<feature type="signal peptide" evidence="2">
    <location>
        <begin position="1"/>
        <end position="25"/>
    </location>
</feature>
<feature type="chain" id="PRO_0000017248" description="Defensin-like protein 149">
    <location>
        <begin position="26"/>
        <end position="78"/>
    </location>
</feature>
<feature type="disulfide bond" evidence="1">
    <location>
        <begin position="36"/>
        <end position="77"/>
    </location>
</feature>
<feature type="disulfide bond" evidence="1">
    <location>
        <begin position="45"/>
        <end position="65"/>
    </location>
</feature>
<feature type="disulfide bond" evidence="1">
    <location>
        <begin position="50"/>
        <end position="71"/>
    </location>
</feature>
<feature type="disulfide bond" evidence="1">
    <location>
        <begin position="54"/>
        <end position="73"/>
    </location>
</feature>
<feature type="sequence conflict" description="In Ref. 4; AAM67275." evidence="4" ref="4">
    <original>L</original>
    <variation>V</variation>
    <location>
        <position position="8"/>
    </location>
</feature>
<keyword id="KW-0929">Antimicrobial</keyword>
<keyword id="KW-1015">Disulfide bond</keyword>
<keyword id="KW-0295">Fungicide</keyword>
<keyword id="KW-0611">Plant defense</keyword>
<keyword id="KW-1185">Reference proteome</keyword>
<keyword id="KW-0964">Secreted</keyword>
<keyword id="KW-0732">Signal</keyword>
<organism evidence="5">
    <name type="scientific">Arabidopsis thaliana</name>
    <name type="common">Mouse-ear cress</name>
    <dbReference type="NCBI Taxonomy" id="3702"/>
    <lineage>
        <taxon>Eukaryota</taxon>
        <taxon>Viridiplantae</taxon>
        <taxon>Streptophyta</taxon>
        <taxon>Embryophyta</taxon>
        <taxon>Tracheophyta</taxon>
        <taxon>Spermatophyta</taxon>
        <taxon>Magnoliopsida</taxon>
        <taxon>eudicotyledons</taxon>
        <taxon>Gunneridae</taxon>
        <taxon>Pentapetalae</taxon>
        <taxon>rosids</taxon>
        <taxon>malvids</taxon>
        <taxon>Brassicales</taxon>
        <taxon>Brassicaceae</taxon>
        <taxon>Camelineae</taxon>
        <taxon>Arabidopsis</taxon>
    </lineage>
</organism>
<proteinExistence type="inferred from homology"/>
<reference evidence="4" key="1">
    <citation type="journal article" date="1999" name="Nature">
        <title>Sequence and analysis of chromosome 2 of the plant Arabidopsis thaliana.</title>
        <authorList>
            <person name="Lin X."/>
            <person name="Kaul S."/>
            <person name="Rounsley S.D."/>
            <person name="Shea T.P."/>
            <person name="Benito M.-I."/>
            <person name="Town C.D."/>
            <person name="Fujii C.Y."/>
            <person name="Mason T.M."/>
            <person name="Bowman C.L."/>
            <person name="Barnstead M.E."/>
            <person name="Feldblyum T.V."/>
            <person name="Buell C.R."/>
            <person name="Ketchum K.A."/>
            <person name="Lee J.J."/>
            <person name="Ronning C.M."/>
            <person name="Koo H.L."/>
            <person name="Moffat K.S."/>
            <person name="Cronin L.A."/>
            <person name="Shen M."/>
            <person name="Pai G."/>
            <person name="Van Aken S."/>
            <person name="Umayam L."/>
            <person name="Tallon L.J."/>
            <person name="Gill J.E."/>
            <person name="Adams M.D."/>
            <person name="Carrera A.J."/>
            <person name="Creasy T.H."/>
            <person name="Goodman H.M."/>
            <person name="Somerville C.R."/>
            <person name="Copenhaver G.P."/>
            <person name="Preuss D."/>
            <person name="Nierman W.C."/>
            <person name="White O."/>
            <person name="Eisen J.A."/>
            <person name="Salzberg S.L."/>
            <person name="Fraser C.M."/>
            <person name="Venter J.C."/>
        </authorList>
    </citation>
    <scope>NUCLEOTIDE SEQUENCE [LARGE SCALE GENOMIC DNA]</scope>
    <source>
        <strain evidence="5">cv. Columbia</strain>
    </source>
</reference>
<reference key="2">
    <citation type="journal article" date="2017" name="Plant J.">
        <title>Araport11: a complete reannotation of the Arabidopsis thaliana reference genome.</title>
        <authorList>
            <person name="Cheng C.Y."/>
            <person name="Krishnakumar V."/>
            <person name="Chan A.P."/>
            <person name="Thibaud-Nissen F."/>
            <person name="Schobel S."/>
            <person name="Town C.D."/>
        </authorList>
    </citation>
    <scope>GENOME REANNOTATION</scope>
    <source>
        <strain>cv. Columbia</strain>
    </source>
</reference>
<reference evidence="4" key="3">
    <citation type="journal article" date="2003" name="Science">
        <title>Empirical analysis of transcriptional activity in the Arabidopsis genome.</title>
        <authorList>
            <person name="Yamada K."/>
            <person name="Lim J."/>
            <person name="Dale J.M."/>
            <person name="Chen H."/>
            <person name="Shinn P."/>
            <person name="Palm C.J."/>
            <person name="Southwick A.M."/>
            <person name="Wu H.C."/>
            <person name="Kim C.J."/>
            <person name="Nguyen M."/>
            <person name="Pham P.K."/>
            <person name="Cheuk R.F."/>
            <person name="Karlin-Newmann G."/>
            <person name="Liu S.X."/>
            <person name="Lam B."/>
            <person name="Sakano H."/>
            <person name="Wu T."/>
            <person name="Yu G."/>
            <person name="Miranda M."/>
            <person name="Quach H.L."/>
            <person name="Tripp M."/>
            <person name="Chang C.H."/>
            <person name="Lee J.M."/>
            <person name="Toriumi M.J."/>
            <person name="Chan M.M."/>
            <person name="Tang C.C."/>
            <person name="Onodera C.S."/>
            <person name="Deng J.M."/>
            <person name="Akiyama K."/>
            <person name="Ansari Y."/>
            <person name="Arakawa T."/>
            <person name="Banh J."/>
            <person name="Banno F."/>
            <person name="Bowser L."/>
            <person name="Brooks S.Y."/>
            <person name="Carninci P."/>
            <person name="Chao Q."/>
            <person name="Choy N."/>
            <person name="Enju A."/>
            <person name="Goldsmith A.D."/>
            <person name="Gurjal M."/>
            <person name="Hansen N.F."/>
            <person name="Hayashizaki Y."/>
            <person name="Johnson-Hopson C."/>
            <person name="Hsuan V.W."/>
            <person name="Iida K."/>
            <person name="Karnes M."/>
            <person name="Khan S."/>
            <person name="Koesema E."/>
            <person name="Ishida J."/>
            <person name="Jiang P.X."/>
            <person name="Jones T."/>
            <person name="Kawai J."/>
            <person name="Kamiya A."/>
            <person name="Meyers C."/>
            <person name="Nakajima M."/>
            <person name="Narusaka M."/>
            <person name="Seki M."/>
            <person name="Sakurai T."/>
            <person name="Satou M."/>
            <person name="Tamse R."/>
            <person name="Vaysberg M."/>
            <person name="Wallender E.K."/>
            <person name="Wong C."/>
            <person name="Yamamura Y."/>
            <person name="Yuan S."/>
            <person name="Shinozaki K."/>
            <person name="Davis R.W."/>
            <person name="Theologis A."/>
            <person name="Ecker J.R."/>
        </authorList>
    </citation>
    <scope>NUCLEOTIDE SEQUENCE [LARGE SCALE MRNA]</scope>
    <source>
        <strain evidence="3">cv. Columbia</strain>
    </source>
</reference>
<reference key="4">
    <citation type="submission" date="2002-03" db="EMBL/GenBank/DDBJ databases">
        <title>Full-length cDNA from Arabidopsis thaliana.</title>
        <authorList>
            <person name="Brover V.V."/>
            <person name="Troukhan M.E."/>
            <person name="Alexandrov N.A."/>
            <person name="Lu Y.-P."/>
            <person name="Flavell R.B."/>
            <person name="Feldmann K.A."/>
        </authorList>
    </citation>
    <scope>NUCLEOTIDE SEQUENCE [LARGE SCALE MRNA]</scope>
</reference>
<reference evidence="4" key="5">
    <citation type="journal article" date="2001" name="Plant Mol. Biol.">
        <title>Two large Arabidopsis thaliana gene families are homologous to the Brassica gene superfamily that encodes pollen coat proteins and the male component of the self-incompatibility response.</title>
        <authorList>
            <person name="Vanoosthuyse V."/>
            <person name="Miege C."/>
            <person name="Dumas C."/>
            <person name="Cock J.M."/>
        </authorList>
    </citation>
    <scope>IDENTIFICATION</scope>
</reference>
<reference key="6">
    <citation type="journal article" date="2005" name="Plant Physiol.">
        <title>Genome organization of more than 300 defensin-like genes in Arabidopsis.</title>
        <authorList>
            <person name="Silverstein K.A.T."/>
            <person name="Graham M.A."/>
            <person name="Paape T.D."/>
            <person name="VandenBosch K.A."/>
        </authorList>
    </citation>
    <scope>GENE FAMILY</scope>
</reference>
<protein>
    <recommendedName>
        <fullName>Defensin-like protein 149</fullName>
    </recommendedName>
    <alternativeName>
        <fullName>Low-molecular-weight cysteine-rich protein 5</fullName>
        <shortName>Protein LCR5</shortName>
    </alternativeName>
</protein>
<comment type="subcellular location">
    <subcellularLocation>
        <location evidence="1">Secreted</location>
    </subcellularLocation>
</comment>
<comment type="similarity">
    <text evidence="4">Belongs to the DEFL family.</text>
</comment>
<comment type="sequence caution" evidence="4">
    <conflict type="erroneous initiation">
        <sequence resource="EMBL-CDS" id="AAM67275"/>
    </conflict>
</comment>
<evidence type="ECO:0000250" key="1"/>
<evidence type="ECO:0000255" key="2"/>
<evidence type="ECO:0000269" key="3">
    <source>
    </source>
</evidence>
<evidence type="ECO:0000305" key="4"/>
<evidence type="ECO:0000312" key="5">
    <source>
        <dbReference type="EMBL" id="AAM15228.1"/>
    </source>
</evidence>
<name>DF149_ARATH</name>